<feature type="chain" id="PRO_0000071228" description="Uncharacterized protein L172">
    <location>
        <begin position="1"/>
        <end position="391"/>
    </location>
</feature>
<comment type="similarity">
    <text evidence="1">Belongs to the mimivirus L17x/L18x family.</text>
</comment>
<name>YL172_MIMIV</name>
<protein>
    <recommendedName>
        <fullName>Uncharacterized protein L172</fullName>
    </recommendedName>
</protein>
<evidence type="ECO:0000305" key="1"/>
<gene>
    <name type="ordered locus">MIMI_L172</name>
</gene>
<accession>Q5UPM8</accession>
<reference key="1">
    <citation type="journal article" date="2004" name="Science">
        <title>The 1.2-megabase genome sequence of Mimivirus.</title>
        <authorList>
            <person name="Raoult D."/>
            <person name="Audic S."/>
            <person name="Robert C."/>
            <person name="Abergel C."/>
            <person name="Renesto P."/>
            <person name="Ogata H."/>
            <person name="La Scola B."/>
            <person name="Susan M."/>
            <person name="Claverie J.-M."/>
        </authorList>
    </citation>
    <scope>NUCLEOTIDE SEQUENCE [LARGE SCALE GENOMIC DNA]</scope>
    <source>
        <strain>Rowbotham-Bradford</strain>
    </source>
</reference>
<organismHost>
    <name type="scientific">Acanthamoeba polyphaga</name>
    <name type="common">Amoeba</name>
    <dbReference type="NCBI Taxonomy" id="5757"/>
</organismHost>
<proteinExistence type="inferred from homology"/>
<sequence>MTELYFCFHESIQKELSKFIVNENKNRDKNQTSKLMIDDNKIINFSTIDGVFNWGNIVIEFNDAIEYIGFLIKSNIHCRMKFHNGKTIGPDADCKCSKNYEDYLLVSVTNGKKKHILFFFRKLLPYLRTHDENINVKLGVSISLLFSKQISTNAIKYMFKISHLKDFCFLFNGLLQYRLISKKLIEYIMDSYQKKLTKHFVEDKIDDKDVAFLDFRKILANTIDNQKSTKLLQYVIDEFSNIANNIDRNDVKKKYRKSYDSLTENYVYDKKIINSLMEHCIYSESSSKFFNILTLDMGDYKNFTPDLVDIIMTHSTMKYTRIFFKNVLVSYPDEINKLFLNSLKYDCDVVDLLVEYGADYNKYGQQLLLEAKRRCKVLLANYLENLMDVTN</sequence>
<dbReference type="EMBL" id="AY653733">
    <property type="protein sequence ID" value="AAV50446.1"/>
    <property type="molecule type" value="Genomic_DNA"/>
</dbReference>
<dbReference type="Proteomes" id="UP000001134">
    <property type="component" value="Genome"/>
</dbReference>
<organism>
    <name type="scientific">Acanthamoeba polyphaga mimivirus</name>
    <name type="common">APMV</name>
    <dbReference type="NCBI Taxonomy" id="212035"/>
    <lineage>
        <taxon>Viruses</taxon>
        <taxon>Varidnaviria</taxon>
        <taxon>Bamfordvirae</taxon>
        <taxon>Nucleocytoviricota</taxon>
        <taxon>Megaviricetes</taxon>
        <taxon>Imitervirales</taxon>
        <taxon>Mimiviridae</taxon>
        <taxon>Megamimivirinae</taxon>
        <taxon>Mimivirus</taxon>
        <taxon>Mimivirus bradfordmassiliense</taxon>
    </lineage>
</organism>
<keyword id="KW-1185">Reference proteome</keyword>